<reference key="1">
    <citation type="journal article" date="2005" name="Nucleic Acids Res.">
        <title>Genome dynamics and diversity of Shigella species, the etiologic agents of bacillary dysentery.</title>
        <authorList>
            <person name="Yang F."/>
            <person name="Yang J."/>
            <person name="Zhang X."/>
            <person name="Chen L."/>
            <person name="Jiang Y."/>
            <person name="Yan Y."/>
            <person name="Tang X."/>
            <person name="Wang J."/>
            <person name="Xiong Z."/>
            <person name="Dong J."/>
            <person name="Xue Y."/>
            <person name="Zhu Y."/>
            <person name="Xu X."/>
            <person name="Sun L."/>
            <person name="Chen S."/>
            <person name="Nie H."/>
            <person name="Peng J."/>
            <person name="Xu J."/>
            <person name="Wang Y."/>
            <person name="Yuan Z."/>
            <person name="Wen Y."/>
            <person name="Yao Z."/>
            <person name="Shen Y."/>
            <person name="Qiang B."/>
            <person name="Hou Y."/>
            <person name="Yu J."/>
            <person name="Jin Q."/>
        </authorList>
    </citation>
    <scope>NUCLEOTIDE SEQUENCE [LARGE SCALE GENOMIC DNA]</scope>
    <source>
        <strain>Ss046</strain>
    </source>
</reference>
<name>HIS6_SHISS</name>
<evidence type="ECO:0000255" key="1">
    <source>
        <dbReference type="HAMAP-Rule" id="MF_01013"/>
    </source>
</evidence>
<dbReference type="EC" id="4.3.2.10" evidence="1"/>
<dbReference type="EMBL" id="CP000038">
    <property type="protein sequence ID" value="AAZ88752.1"/>
    <property type="molecule type" value="Genomic_DNA"/>
</dbReference>
<dbReference type="RefSeq" id="WP_000880193.1">
    <property type="nucleotide sequence ID" value="NC_007384.1"/>
</dbReference>
<dbReference type="SMR" id="Q3Z0G0"/>
<dbReference type="GeneID" id="93775148"/>
<dbReference type="KEGG" id="ssn:SSON_2096"/>
<dbReference type="HOGENOM" id="CLU_048577_4_0_6"/>
<dbReference type="UniPathway" id="UPA00031">
    <property type="reaction ID" value="UER00010"/>
</dbReference>
<dbReference type="Proteomes" id="UP000002529">
    <property type="component" value="Chromosome"/>
</dbReference>
<dbReference type="GO" id="GO:0005737">
    <property type="term" value="C:cytoplasm"/>
    <property type="evidence" value="ECO:0007669"/>
    <property type="project" value="UniProtKB-SubCell"/>
</dbReference>
<dbReference type="GO" id="GO:0000107">
    <property type="term" value="F:imidazoleglycerol-phosphate synthase activity"/>
    <property type="evidence" value="ECO:0007669"/>
    <property type="project" value="UniProtKB-UniRule"/>
</dbReference>
<dbReference type="GO" id="GO:0016829">
    <property type="term" value="F:lyase activity"/>
    <property type="evidence" value="ECO:0007669"/>
    <property type="project" value="UniProtKB-KW"/>
</dbReference>
<dbReference type="GO" id="GO:0000105">
    <property type="term" value="P:L-histidine biosynthetic process"/>
    <property type="evidence" value="ECO:0007669"/>
    <property type="project" value="UniProtKB-UniRule"/>
</dbReference>
<dbReference type="CDD" id="cd04731">
    <property type="entry name" value="HisF"/>
    <property type="match status" value="1"/>
</dbReference>
<dbReference type="FunFam" id="3.20.20.70:FF:000006">
    <property type="entry name" value="Imidazole glycerol phosphate synthase subunit HisF"/>
    <property type="match status" value="1"/>
</dbReference>
<dbReference type="Gene3D" id="3.20.20.70">
    <property type="entry name" value="Aldolase class I"/>
    <property type="match status" value="1"/>
</dbReference>
<dbReference type="HAMAP" id="MF_01013">
    <property type="entry name" value="HisF"/>
    <property type="match status" value="1"/>
</dbReference>
<dbReference type="InterPro" id="IPR013785">
    <property type="entry name" value="Aldolase_TIM"/>
</dbReference>
<dbReference type="InterPro" id="IPR006062">
    <property type="entry name" value="His_biosynth"/>
</dbReference>
<dbReference type="InterPro" id="IPR004651">
    <property type="entry name" value="HisF"/>
</dbReference>
<dbReference type="InterPro" id="IPR050064">
    <property type="entry name" value="IGPS_HisA/HisF"/>
</dbReference>
<dbReference type="InterPro" id="IPR011060">
    <property type="entry name" value="RibuloseP-bd_barrel"/>
</dbReference>
<dbReference type="NCBIfam" id="TIGR00735">
    <property type="entry name" value="hisF"/>
    <property type="match status" value="1"/>
</dbReference>
<dbReference type="PANTHER" id="PTHR21235:SF2">
    <property type="entry name" value="IMIDAZOLE GLYCEROL PHOSPHATE SYNTHASE HISHF"/>
    <property type="match status" value="1"/>
</dbReference>
<dbReference type="PANTHER" id="PTHR21235">
    <property type="entry name" value="IMIDAZOLE GLYCEROL PHOSPHATE SYNTHASE SUBUNIT HISF/H IGP SYNTHASE SUBUNIT HISF/H"/>
    <property type="match status" value="1"/>
</dbReference>
<dbReference type="Pfam" id="PF00977">
    <property type="entry name" value="His_biosynth"/>
    <property type="match status" value="1"/>
</dbReference>
<dbReference type="SUPFAM" id="SSF51366">
    <property type="entry name" value="Ribulose-phoshate binding barrel"/>
    <property type="match status" value="1"/>
</dbReference>
<protein>
    <recommendedName>
        <fullName evidence="1">Imidazole glycerol phosphate synthase subunit HisF</fullName>
        <ecNumber evidence="1">4.3.2.10</ecNumber>
    </recommendedName>
    <alternativeName>
        <fullName evidence="1">IGP synthase cyclase subunit</fullName>
    </alternativeName>
    <alternativeName>
        <fullName evidence="1">IGP synthase subunit HisF</fullName>
    </alternativeName>
    <alternativeName>
        <fullName evidence="1">ImGP synthase subunit HisF</fullName>
        <shortName evidence="1">IGPS subunit HisF</shortName>
    </alternativeName>
</protein>
<feature type="chain" id="PRO_0000142230" description="Imidazole glycerol phosphate synthase subunit HisF">
    <location>
        <begin position="1"/>
        <end position="258"/>
    </location>
</feature>
<feature type="active site" evidence="1">
    <location>
        <position position="11"/>
    </location>
</feature>
<feature type="active site" evidence="1">
    <location>
        <position position="130"/>
    </location>
</feature>
<sequence length="258" mass="28440">MLAKRIIPCLDVRDGQVVKGVQFRNHEIIGDIVPLAKRYAEEGADELVFYDITASSDGRVVDKSWVSRVAEVIDIPFCVAGGIKSLEDAAKILSFGADKISINSPALADPTLITRLADRFGVQCIVVGIDTWYDGETGKYHVNQYTGDESRTRVTQWETLDWVQEVQKRGAGEIVLNMMNQDGVRNGYDLEQLKKVREVCHVPLIASGGAGTMEHFLEAFRDADVDGALAASVFHKQIINIGELKAYLATQGVEIRIC</sequence>
<comment type="function">
    <text evidence="1">IGPS catalyzes the conversion of PRFAR and glutamine to IGP, AICAR and glutamate. The HisF subunit catalyzes the cyclization activity that produces IGP and AICAR from PRFAR using the ammonia provided by the HisH subunit.</text>
</comment>
<comment type="catalytic activity">
    <reaction evidence="1">
        <text>5-[(5-phospho-1-deoxy-D-ribulos-1-ylimino)methylamino]-1-(5-phospho-beta-D-ribosyl)imidazole-4-carboxamide + L-glutamine = D-erythro-1-(imidazol-4-yl)glycerol 3-phosphate + 5-amino-1-(5-phospho-beta-D-ribosyl)imidazole-4-carboxamide + L-glutamate + H(+)</text>
        <dbReference type="Rhea" id="RHEA:24793"/>
        <dbReference type="ChEBI" id="CHEBI:15378"/>
        <dbReference type="ChEBI" id="CHEBI:29985"/>
        <dbReference type="ChEBI" id="CHEBI:58278"/>
        <dbReference type="ChEBI" id="CHEBI:58359"/>
        <dbReference type="ChEBI" id="CHEBI:58475"/>
        <dbReference type="ChEBI" id="CHEBI:58525"/>
        <dbReference type="EC" id="4.3.2.10"/>
    </reaction>
</comment>
<comment type="pathway">
    <text evidence="1">Amino-acid biosynthesis; L-histidine biosynthesis; L-histidine from 5-phospho-alpha-D-ribose 1-diphosphate: step 5/9.</text>
</comment>
<comment type="subunit">
    <text evidence="1">Heterodimer of HisH and HisF.</text>
</comment>
<comment type="subcellular location">
    <subcellularLocation>
        <location evidence="1">Cytoplasm</location>
    </subcellularLocation>
</comment>
<comment type="similarity">
    <text evidence="1">Belongs to the HisA/HisF family.</text>
</comment>
<accession>Q3Z0G0</accession>
<gene>
    <name evidence="1" type="primary">hisF</name>
    <name type="ordered locus">SSON_2096</name>
</gene>
<keyword id="KW-0028">Amino-acid biosynthesis</keyword>
<keyword id="KW-0963">Cytoplasm</keyword>
<keyword id="KW-0368">Histidine biosynthesis</keyword>
<keyword id="KW-0456">Lyase</keyword>
<keyword id="KW-1185">Reference proteome</keyword>
<organism>
    <name type="scientific">Shigella sonnei (strain Ss046)</name>
    <dbReference type="NCBI Taxonomy" id="300269"/>
    <lineage>
        <taxon>Bacteria</taxon>
        <taxon>Pseudomonadati</taxon>
        <taxon>Pseudomonadota</taxon>
        <taxon>Gammaproteobacteria</taxon>
        <taxon>Enterobacterales</taxon>
        <taxon>Enterobacteriaceae</taxon>
        <taxon>Shigella</taxon>
    </lineage>
</organism>
<proteinExistence type="inferred from homology"/>